<organism>
    <name type="scientific">Porphyra purpurea</name>
    <name type="common">Red seaweed</name>
    <name type="synonym">Ulva purpurea</name>
    <dbReference type="NCBI Taxonomy" id="2787"/>
    <lineage>
        <taxon>Eukaryota</taxon>
        <taxon>Rhodophyta</taxon>
        <taxon>Bangiophyceae</taxon>
        <taxon>Bangiales</taxon>
        <taxon>Bangiaceae</taxon>
        <taxon>Porphyra</taxon>
    </lineage>
</organism>
<feature type="chain" id="PRO_0000183011" description="Putative transport permease ycf38">
    <location>
        <begin position="1"/>
        <end position="291"/>
    </location>
</feature>
<feature type="transmembrane region" description="Helical" evidence="1">
    <location>
        <begin position="47"/>
        <end position="67"/>
    </location>
</feature>
<feature type="transmembrane region" description="Helical" evidence="1">
    <location>
        <begin position="87"/>
        <end position="107"/>
    </location>
</feature>
<feature type="transmembrane region" description="Helical" evidence="1">
    <location>
        <begin position="135"/>
        <end position="155"/>
    </location>
</feature>
<feature type="transmembrane region" description="Helical" evidence="1">
    <location>
        <begin position="165"/>
        <end position="185"/>
    </location>
</feature>
<feature type="transmembrane region" description="Helical" evidence="1">
    <location>
        <begin position="195"/>
        <end position="215"/>
    </location>
</feature>
<feature type="transmembrane region" description="Helical" evidence="1">
    <location>
        <begin position="262"/>
        <end position="282"/>
    </location>
</feature>
<feature type="domain" description="ABC transmembrane type-2" evidence="2">
    <location>
        <begin position="47"/>
        <end position="289"/>
    </location>
</feature>
<comment type="subcellular location">
    <subcellularLocation>
        <location evidence="3">Plastid</location>
        <location evidence="3">Chloroplast membrane</location>
        <topology evidence="3">Multi-pass membrane protein</topology>
    </subcellularLocation>
</comment>
<comment type="similarity">
    <text evidence="3">Belongs to the ABC-2 integral membrane protein family.</text>
</comment>
<reference key="1">
    <citation type="journal article" date="1995" name="Plant Mol. Biol. Rep.">
        <title>Complete nucleotide sequence of the Porphyra purpurea chloroplast genome.</title>
        <authorList>
            <person name="Reith M.E."/>
            <person name="Munholland J."/>
        </authorList>
    </citation>
    <scope>NUCLEOTIDE SEQUENCE [LARGE SCALE GENOMIC DNA]</scope>
    <source>
        <strain>Avonport</strain>
    </source>
</reference>
<protein>
    <recommendedName>
        <fullName>Putative transport permease ycf38</fullName>
    </recommendedName>
    <alternativeName>
        <fullName>ORF291</fullName>
    </alternativeName>
</protein>
<gene>
    <name type="primary">ycf38</name>
</gene>
<proteinExistence type="inferred from homology"/>
<dbReference type="EMBL" id="U38804">
    <property type="protein sequence ID" value="AAC08207.1"/>
    <property type="molecule type" value="Genomic_DNA"/>
</dbReference>
<dbReference type="PIR" id="S73242">
    <property type="entry name" value="S73242"/>
</dbReference>
<dbReference type="RefSeq" id="NP_053931.1">
    <property type="nucleotide sequence ID" value="NC_000925.1"/>
</dbReference>
<dbReference type="SMR" id="P51321"/>
<dbReference type="GeneID" id="809950"/>
<dbReference type="GO" id="GO:0043190">
    <property type="term" value="C:ATP-binding cassette (ABC) transporter complex"/>
    <property type="evidence" value="ECO:0007669"/>
    <property type="project" value="InterPro"/>
</dbReference>
<dbReference type="GO" id="GO:0031969">
    <property type="term" value="C:chloroplast membrane"/>
    <property type="evidence" value="ECO:0007669"/>
    <property type="project" value="UniProtKB-SubCell"/>
</dbReference>
<dbReference type="GO" id="GO:0140359">
    <property type="term" value="F:ABC-type transporter activity"/>
    <property type="evidence" value="ECO:0007669"/>
    <property type="project" value="InterPro"/>
</dbReference>
<dbReference type="InterPro" id="IPR013525">
    <property type="entry name" value="ABC2_TM"/>
</dbReference>
<dbReference type="InterPro" id="IPR047817">
    <property type="entry name" value="ABC2_TM_bact-type"/>
</dbReference>
<dbReference type="InterPro" id="IPR000412">
    <property type="entry name" value="ABC_2_transport"/>
</dbReference>
<dbReference type="InterPro" id="IPR051328">
    <property type="entry name" value="T7SS_ABC-Transporter"/>
</dbReference>
<dbReference type="PANTHER" id="PTHR43077:SF10">
    <property type="entry name" value="TRANSPORT PERMEASE PROTEIN"/>
    <property type="match status" value="1"/>
</dbReference>
<dbReference type="PANTHER" id="PTHR43077">
    <property type="entry name" value="TRANSPORT PERMEASE YVFS-RELATED"/>
    <property type="match status" value="1"/>
</dbReference>
<dbReference type="Pfam" id="PF01061">
    <property type="entry name" value="ABC2_membrane"/>
    <property type="match status" value="1"/>
</dbReference>
<dbReference type="PRINTS" id="PR00164">
    <property type="entry name" value="ABC2TRNSPORT"/>
</dbReference>
<dbReference type="PROSITE" id="PS51012">
    <property type="entry name" value="ABC_TM2"/>
    <property type="match status" value="1"/>
</dbReference>
<geneLocation type="chloroplast"/>
<evidence type="ECO:0000255" key="1"/>
<evidence type="ECO:0000255" key="2">
    <source>
        <dbReference type="PROSITE-ProRule" id="PRU00442"/>
    </source>
</evidence>
<evidence type="ECO:0000305" key="3"/>
<name>YCF38_PORPU</name>
<sequence>MTFAFSKKIELKPILKFDTPKVYSYEIIQEIEALVQRLFLQVWRRPATLMAGIIQPLLWLVLFGGLFCNAPVNLFTINTSYNRFLSSGIIVFTSFTGALNSGLPLMFDREFGFLNRLLTAPLISRTSIIFSSATFMTCLSLIQVIFIVIASLFMGNSPLSSNSTLIFALIVLLVTVGVTMLSLALSFTLPGHIELLALILVVNLPFLFSSTALAPLYFMPPWLQLIASLNPLSYAIEGIRYIYSNTDWNFTESVIKISWGDISLGQIISLLLFLDVIGAYIVSNILKARLN</sequence>
<keyword id="KW-0150">Chloroplast</keyword>
<keyword id="KW-0472">Membrane</keyword>
<keyword id="KW-0934">Plastid</keyword>
<keyword id="KW-0812">Transmembrane</keyword>
<keyword id="KW-1133">Transmembrane helix</keyword>
<keyword id="KW-0813">Transport</keyword>
<accession>P51321</accession>